<accession>Q941H7</accession>
<evidence type="ECO:0000250" key="1"/>
<evidence type="ECO:0000305" key="2"/>
<dbReference type="EMBL" id="AY049013">
    <property type="protein sequence ID" value="AAL07320.1"/>
    <property type="molecule type" value="mRNA"/>
</dbReference>
<dbReference type="SMR" id="Q941H7"/>
<dbReference type="Allergome" id="3353">
    <property type="allergen name" value="Lit c 1.0101"/>
</dbReference>
<dbReference type="Allergome" id="449">
    <property type="allergen name" value="Lit c 1"/>
</dbReference>
<dbReference type="GO" id="GO:0005938">
    <property type="term" value="C:cell cortex"/>
    <property type="evidence" value="ECO:0007669"/>
    <property type="project" value="TreeGrafter"/>
</dbReference>
<dbReference type="GO" id="GO:0005856">
    <property type="term" value="C:cytoskeleton"/>
    <property type="evidence" value="ECO:0007669"/>
    <property type="project" value="UniProtKB-SubCell"/>
</dbReference>
<dbReference type="GO" id="GO:0003785">
    <property type="term" value="F:actin monomer binding"/>
    <property type="evidence" value="ECO:0007669"/>
    <property type="project" value="TreeGrafter"/>
</dbReference>
<dbReference type="CDD" id="cd00148">
    <property type="entry name" value="PROF"/>
    <property type="match status" value="1"/>
</dbReference>
<dbReference type="FunFam" id="3.30.450.30:FF:000001">
    <property type="entry name" value="Profilin"/>
    <property type="match status" value="1"/>
</dbReference>
<dbReference type="Gene3D" id="3.30.450.30">
    <property type="entry name" value="Dynein light chain 2a, cytoplasmic"/>
    <property type="match status" value="1"/>
</dbReference>
<dbReference type="InterPro" id="IPR048278">
    <property type="entry name" value="PFN"/>
</dbReference>
<dbReference type="InterPro" id="IPR005455">
    <property type="entry name" value="PFN_euk"/>
</dbReference>
<dbReference type="InterPro" id="IPR036140">
    <property type="entry name" value="PFN_sf"/>
</dbReference>
<dbReference type="InterPro" id="IPR027310">
    <property type="entry name" value="Profilin_CS"/>
</dbReference>
<dbReference type="PANTHER" id="PTHR11604">
    <property type="entry name" value="PROFILIN"/>
    <property type="match status" value="1"/>
</dbReference>
<dbReference type="PANTHER" id="PTHR11604:SF67">
    <property type="entry name" value="PROFILIN LP04"/>
    <property type="match status" value="1"/>
</dbReference>
<dbReference type="Pfam" id="PF00235">
    <property type="entry name" value="Profilin"/>
    <property type="match status" value="1"/>
</dbReference>
<dbReference type="PRINTS" id="PR00392">
    <property type="entry name" value="PROFILIN"/>
</dbReference>
<dbReference type="PRINTS" id="PR01640">
    <property type="entry name" value="PROFILINPLNT"/>
</dbReference>
<dbReference type="SMART" id="SM00392">
    <property type="entry name" value="PROF"/>
    <property type="match status" value="1"/>
</dbReference>
<dbReference type="SUPFAM" id="SSF55770">
    <property type="entry name" value="Profilin (actin-binding protein)"/>
    <property type="match status" value="1"/>
</dbReference>
<dbReference type="PROSITE" id="PS00414">
    <property type="entry name" value="PROFILIN"/>
    <property type="match status" value="1"/>
</dbReference>
<comment type="function">
    <text evidence="1">Binds to actin and affects the structure of the cytoskeleton. At high concentrations, profilin prevents the polymerization of actin, whereas it enhances it at low concentrations. By binding to PIP2, it inhibits the formation of IP3 and DG (By similarity).</text>
</comment>
<comment type="subunit">
    <text>Occurs in many kinds of cells as a complex with monomeric actin in a 1:1 ratio.</text>
</comment>
<comment type="subcellular location">
    <subcellularLocation>
        <location evidence="1">Cytoplasm</location>
        <location evidence="1">Cytoskeleton</location>
    </subcellularLocation>
</comment>
<comment type="allergen">
    <text>Causes an allergic reaction in human.</text>
</comment>
<comment type="similarity">
    <text evidence="2">Belongs to the profilin family.</text>
</comment>
<reference key="1">
    <citation type="submission" date="2001-07" db="EMBL/GenBank/DDBJ databases">
        <title>Characterization of the minor allergen lychee profilin (Litchi chinensis).</title>
        <authorList>
            <person name="Reindl J."/>
            <person name="Scheurer S."/>
            <person name="Wangorsch A."/>
            <person name="Haustein D."/>
            <person name="Vieths S."/>
        </authorList>
    </citation>
    <scope>NUCLEOTIDE SEQUENCE [MRNA]</scope>
</reference>
<protein>
    <recommendedName>
        <fullName>Profilin</fullName>
    </recommendedName>
    <alternativeName>
        <fullName>Minor allergen Lit c 1</fullName>
    </alternativeName>
    <allergenName>Lit c 1</allergenName>
</protein>
<organism>
    <name type="scientific">Litchi chinensis</name>
    <name type="common">Lychee</name>
    <dbReference type="NCBI Taxonomy" id="151069"/>
    <lineage>
        <taxon>Eukaryota</taxon>
        <taxon>Viridiplantae</taxon>
        <taxon>Streptophyta</taxon>
        <taxon>Embryophyta</taxon>
        <taxon>Tracheophyta</taxon>
        <taxon>Spermatophyta</taxon>
        <taxon>Magnoliopsida</taxon>
        <taxon>eudicotyledons</taxon>
        <taxon>Gunneridae</taxon>
        <taxon>Pentapetalae</taxon>
        <taxon>rosids</taxon>
        <taxon>malvids</taxon>
        <taxon>Sapindales</taxon>
        <taxon>Sapindaceae</taxon>
        <taxon>Litchi</taxon>
    </lineage>
</organism>
<name>PROF_LITCN</name>
<keyword id="KW-0009">Actin-binding</keyword>
<keyword id="KW-0020">Allergen</keyword>
<keyword id="KW-0963">Cytoplasm</keyword>
<keyword id="KW-0206">Cytoskeleton</keyword>
<sequence>MSWQTYVDDHLMCETDGQHLTAAAIIGHDGSVWAQSANFPQFKPAEIAAIMKDFDEPGSLAPTGLHLGGTKYMVIQGEPGAVIRGKKGPGGITVKKTTQALIIGIYDEPMTPGQCNMVVERLGDYLVDQGL</sequence>
<proteinExistence type="evidence at protein level"/>
<feature type="initiator methionine" description="Removed" evidence="1">
    <location>
        <position position="1"/>
    </location>
</feature>
<feature type="chain" id="PRO_0000199643" description="Profilin">
    <location>
        <begin position="2"/>
        <end position="131"/>
    </location>
</feature>